<organism>
    <name type="scientific">Myxococcus xanthus</name>
    <dbReference type="NCBI Taxonomy" id="34"/>
    <lineage>
        <taxon>Bacteria</taxon>
        <taxon>Pseudomonadati</taxon>
        <taxon>Myxococcota</taxon>
        <taxon>Myxococcia</taxon>
        <taxon>Myxococcales</taxon>
        <taxon>Cystobacterineae</taxon>
        <taxon>Myxococcaceae</taxon>
        <taxon>Myxococcus</taxon>
    </lineage>
</organism>
<proteinExistence type="evidence at protein level"/>
<feature type="chain" id="PRO_0000135267" description="Protoporphyrinogen oxidase">
    <location>
        <begin position="1"/>
        <end position="471"/>
    </location>
</feature>
<feature type="binding site" evidence="2">
    <location>
        <begin position="16"/>
        <end position="21"/>
    </location>
    <ligand>
        <name>FAD</name>
        <dbReference type="ChEBI" id="CHEBI:57692"/>
    </ligand>
</feature>
<feature type="binding site" evidence="2">
    <location>
        <begin position="39"/>
        <end position="40"/>
    </location>
    <ligand>
        <name>FAD</name>
        <dbReference type="ChEBI" id="CHEBI:57692"/>
    </ligand>
</feature>
<feature type="binding site" evidence="2">
    <location>
        <position position="47"/>
    </location>
    <ligand>
        <name>FAD</name>
        <dbReference type="ChEBI" id="CHEBI:57692"/>
    </ligand>
</feature>
<feature type="binding site" evidence="2">
    <location>
        <begin position="61"/>
        <end position="64"/>
    </location>
    <ligand>
        <name>FAD</name>
        <dbReference type="ChEBI" id="CHEBI:57692"/>
    </ligand>
</feature>
<feature type="binding site" evidence="2">
    <location>
        <position position="251"/>
    </location>
    <ligand>
        <name>FAD</name>
        <dbReference type="ChEBI" id="CHEBI:57692"/>
    </ligand>
</feature>
<feature type="binding site" evidence="1">
    <location>
        <position position="408"/>
    </location>
    <ligand>
        <name>FAD</name>
        <dbReference type="ChEBI" id="CHEBI:57692"/>
    </ligand>
</feature>
<feature type="binding site" evidence="2">
    <location>
        <begin position="446"/>
        <end position="448"/>
    </location>
    <ligand>
        <name>FAD</name>
        <dbReference type="ChEBI" id="CHEBI:57692"/>
    </ligand>
</feature>
<feature type="strand" evidence="9">
    <location>
        <begin position="12"/>
        <end position="15"/>
    </location>
</feature>
<feature type="helix" evidence="9">
    <location>
        <begin position="19"/>
        <end position="29"/>
    </location>
</feature>
<feature type="turn" evidence="9">
    <location>
        <begin position="30"/>
        <end position="32"/>
    </location>
</feature>
<feature type="strand" evidence="9">
    <location>
        <begin position="35"/>
        <end position="38"/>
    </location>
</feature>
<feature type="strand" evidence="9">
    <location>
        <begin position="40"/>
        <end position="45"/>
    </location>
</feature>
<feature type="strand" evidence="9">
    <location>
        <begin position="50"/>
        <end position="53"/>
    </location>
</feature>
<feature type="strand" evidence="9">
    <location>
        <begin position="56"/>
        <end position="61"/>
    </location>
</feature>
<feature type="helix" evidence="9">
    <location>
        <begin position="70"/>
        <end position="78"/>
    </location>
</feature>
<feature type="helix" evidence="9">
    <location>
        <begin position="82"/>
        <end position="84"/>
    </location>
</feature>
<feature type="strand" evidence="10">
    <location>
        <begin position="85"/>
        <end position="87"/>
    </location>
</feature>
<feature type="strand" evidence="9">
    <location>
        <begin position="95"/>
        <end position="99"/>
    </location>
</feature>
<feature type="strand" evidence="9">
    <location>
        <begin position="102"/>
        <end position="105"/>
    </location>
</feature>
<feature type="helix" evidence="9">
    <location>
        <begin position="110"/>
        <end position="114"/>
    </location>
</feature>
<feature type="strand" evidence="9">
    <location>
        <begin position="117"/>
        <end position="119"/>
    </location>
</feature>
<feature type="helix" evidence="9">
    <location>
        <begin position="121"/>
        <end position="128"/>
    </location>
</feature>
<feature type="helix" evidence="9">
    <location>
        <begin position="129"/>
        <end position="132"/>
    </location>
</feature>
<feature type="helix" evidence="9">
    <location>
        <begin position="144"/>
        <end position="151"/>
    </location>
</feature>
<feature type="helix" evidence="9">
    <location>
        <begin position="154"/>
        <end position="159"/>
    </location>
</feature>
<feature type="helix" evidence="9">
    <location>
        <begin position="161"/>
        <end position="169"/>
    </location>
</feature>
<feature type="turn" evidence="9">
    <location>
        <begin position="173"/>
        <end position="175"/>
    </location>
</feature>
<feature type="helix" evidence="9">
    <location>
        <begin position="178"/>
        <end position="181"/>
    </location>
</feature>
<feature type="helix" evidence="9">
    <location>
        <begin position="183"/>
        <end position="192"/>
    </location>
</feature>
<feature type="helix" evidence="9">
    <location>
        <begin position="195"/>
        <end position="206"/>
    </location>
</feature>
<feature type="strand" evidence="9">
    <location>
        <begin position="223"/>
        <end position="226"/>
    </location>
</feature>
<feature type="helix" evidence="9">
    <location>
        <begin position="231"/>
        <end position="241"/>
    </location>
</feature>
<feature type="helix" evidence="9">
    <location>
        <begin position="242"/>
        <end position="244"/>
    </location>
</feature>
<feature type="strand" evidence="9">
    <location>
        <begin position="245"/>
        <end position="255"/>
    </location>
</feature>
<feature type="strand" evidence="9">
    <location>
        <begin position="262"/>
        <end position="267"/>
    </location>
</feature>
<feature type="strand" evidence="9">
    <location>
        <begin position="270"/>
        <end position="275"/>
    </location>
</feature>
<feature type="strand" evidence="9">
    <location>
        <begin position="277"/>
        <end position="281"/>
    </location>
</feature>
<feature type="helix" evidence="9">
    <location>
        <begin position="285"/>
        <end position="292"/>
    </location>
</feature>
<feature type="turn" evidence="9">
    <location>
        <begin position="293"/>
        <end position="295"/>
    </location>
</feature>
<feature type="helix" evidence="9">
    <location>
        <begin position="297"/>
        <end position="304"/>
    </location>
</feature>
<feature type="strand" evidence="9">
    <location>
        <begin position="311"/>
        <end position="318"/>
    </location>
</feature>
<feature type="strand" evidence="9">
    <location>
        <begin position="328"/>
        <end position="332"/>
    </location>
</feature>
<feature type="helix" evidence="9">
    <location>
        <begin position="335"/>
        <end position="337"/>
    </location>
</feature>
<feature type="strand" evidence="9">
    <location>
        <begin position="343"/>
        <end position="346"/>
    </location>
</feature>
<feature type="helix" evidence="9">
    <location>
        <begin position="347"/>
        <end position="350"/>
    </location>
</feature>
<feature type="helix" evidence="9">
    <location>
        <begin position="352"/>
        <end position="354"/>
    </location>
</feature>
<feature type="strand" evidence="9">
    <location>
        <begin position="360"/>
        <end position="367"/>
    </location>
</feature>
<feature type="helix" evidence="9">
    <location>
        <begin position="372"/>
        <end position="376"/>
    </location>
</feature>
<feature type="helix" evidence="9">
    <location>
        <begin position="379"/>
        <end position="394"/>
    </location>
</feature>
<feature type="strand" evidence="9">
    <location>
        <begin position="401"/>
        <end position="410"/>
    </location>
</feature>
<feature type="helix" evidence="9">
    <location>
        <begin position="419"/>
        <end position="431"/>
    </location>
</feature>
<feature type="strand" evidence="9">
    <location>
        <begin position="436"/>
        <end position="438"/>
    </location>
</feature>
<feature type="turn" evidence="9">
    <location>
        <begin position="441"/>
        <end position="443"/>
    </location>
</feature>
<feature type="helix" evidence="9">
    <location>
        <begin position="448"/>
        <end position="462"/>
    </location>
</feature>
<name>PGOX_MYXXA</name>
<accession>P56601</accession>
<gene>
    <name evidence="5" type="primary">pgoX</name>
    <name type="synonym">hemY</name>
</gene>
<keyword id="KW-0002">3D-structure</keyword>
<keyword id="KW-1003">Cell membrane</keyword>
<keyword id="KW-0963">Cytoplasm</keyword>
<keyword id="KW-0274">FAD</keyword>
<keyword id="KW-0285">Flavoprotein</keyword>
<keyword id="KW-0350">Heme biosynthesis</keyword>
<keyword id="KW-0472">Membrane</keyword>
<keyword id="KW-0560">Oxidoreductase</keyword>
<dbReference type="EC" id="1.3.3.4" evidence="2"/>
<dbReference type="EMBL" id="L27429">
    <property type="protein sequence ID" value="AAM28643.1"/>
    <property type="molecule type" value="Genomic_DNA"/>
</dbReference>
<dbReference type="EMBL" id="AF098938">
    <property type="protein sequence ID" value="AAD13609.1"/>
    <property type="molecule type" value="Genomic_DNA"/>
</dbReference>
<dbReference type="PDB" id="2IVD">
    <property type="method" value="X-ray"/>
    <property type="resolution" value="2.30 A"/>
    <property type="chains" value="A/B=4-471"/>
</dbReference>
<dbReference type="PDB" id="2IVE">
    <property type="method" value="X-ray"/>
    <property type="resolution" value="2.70 A"/>
    <property type="chains" value="A/B=4-471"/>
</dbReference>
<dbReference type="PDBsum" id="2IVD"/>
<dbReference type="PDBsum" id="2IVE"/>
<dbReference type="SMR" id="P56601"/>
<dbReference type="DrugBank" id="DB07338">
    <property type="generic name" value="Acifluorfen"/>
</dbReference>
<dbReference type="OMA" id="WFDQWFG"/>
<dbReference type="BRENDA" id="1.3.3.4">
    <property type="organism ID" value="3551"/>
</dbReference>
<dbReference type="SABIO-RK" id="P56601"/>
<dbReference type="UniPathway" id="UPA00251">
    <property type="reaction ID" value="UER00324"/>
</dbReference>
<dbReference type="EvolutionaryTrace" id="P56601"/>
<dbReference type="GO" id="GO:0005737">
    <property type="term" value="C:cytoplasm"/>
    <property type="evidence" value="ECO:0007669"/>
    <property type="project" value="UniProtKB-SubCell"/>
</dbReference>
<dbReference type="GO" id="GO:0005886">
    <property type="term" value="C:plasma membrane"/>
    <property type="evidence" value="ECO:0007669"/>
    <property type="project" value="UniProtKB-SubCell"/>
</dbReference>
<dbReference type="GO" id="GO:0004729">
    <property type="term" value="F:oxygen-dependent protoporphyrinogen oxidase activity"/>
    <property type="evidence" value="ECO:0007669"/>
    <property type="project" value="InterPro"/>
</dbReference>
<dbReference type="GO" id="GO:0006782">
    <property type="term" value="P:protoporphyrinogen IX biosynthetic process"/>
    <property type="evidence" value="ECO:0007669"/>
    <property type="project" value="UniProtKB-UniPathway"/>
</dbReference>
<dbReference type="Gene3D" id="3.50.50.60">
    <property type="entry name" value="FAD/NAD(P)-binding domain"/>
    <property type="match status" value="1"/>
</dbReference>
<dbReference type="Gene3D" id="1.10.3110.10">
    <property type="entry name" value="protoporphyrinogen ix oxidase, domain 3"/>
    <property type="match status" value="1"/>
</dbReference>
<dbReference type="Gene3D" id="3.90.660.20">
    <property type="entry name" value="Protoporphyrinogen oxidase, mitochondrial, domain 2"/>
    <property type="match status" value="1"/>
</dbReference>
<dbReference type="InterPro" id="IPR002937">
    <property type="entry name" value="Amino_oxidase"/>
</dbReference>
<dbReference type="InterPro" id="IPR036188">
    <property type="entry name" value="FAD/NAD-bd_sf"/>
</dbReference>
<dbReference type="InterPro" id="IPR004572">
    <property type="entry name" value="Protoporphyrinogen_oxidase"/>
</dbReference>
<dbReference type="InterPro" id="IPR050464">
    <property type="entry name" value="Zeta_carotene_desat/Oxidored"/>
</dbReference>
<dbReference type="NCBIfam" id="TIGR00562">
    <property type="entry name" value="proto_IX_ox"/>
    <property type="match status" value="1"/>
</dbReference>
<dbReference type="PANTHER" id="PTHR42923">
    <property type="entry name" value="PROTOPORPHYRINOGEN OXIDASE"/>
    <property type="match status" value="1"/>
</dbReference>
<dbReference type="PANTHER" id="PTHR42923:SF3">
    <property type="entry name" value="PROTOPORPHYRINOGEN OXIDASE"/>
    <property type="match status" value="1"/>
</dbReference>
<dbReference type="Pfam" id="PF01593">
    <property type="entry name" value="Amino_oxidase"/>
    <property type="match status" value="1"/>
</dbReference>
<dbReference type="SUPFAM" id="SSF54373">
    <property type="entry name" value="FAD-linked reductases, C-terminal domain"/>
    <property type="match status" value="1"/>
</dbReference>
<dbReference type="SUPFAM" id="SSF51905">
    <property type="entry name" value="FAD/NAD(P)-binding domain"/>
    <property type="match status" value="1"/>
</dbReference>
<comment type="function">
    <text evidence="3 5">Catalyzes the 6-electron oxidation of protoporphyrinogen-IX to form protoporphyrin-IX (PubMed:8621504). Does not oxidize coproporphyrinogen III (PubMed:8621504). Involved in the classical protoporphyrin-dependent (PPD) heme b biosynthesis (PubMed:28123057).</text>
</comment>
<comment type="catalytic activity">
    <reaction evidence="3">
        <text>protoporphyrinogen IX + 3 O2 = protoporphyrin IX + 3 H2O2</text>
        <dbReference type="Rhea" id="RHEA:25576"/>
        <dbReference type="ChEBI" id="CHEBI:15379"/>
        <dbReference type="ChEBI" id="CHEBI:16240"/>
        <dbReference type="ChEBI" id="CHEBI:57306"/>
        <dbReference type="ChEBI" id="CHEBI:57307"/>
        <dbReference type="EC" id="1.3.3.4"/>
    </reaction>
    <physiologicalReaction direction="left-to-right" evidence="3">
        <dbReference type="Rhea" id="RHEA:25577"/>
    </physiologicalReaction>
</comment>
<comment type="cofactor">
    <cofactor evidence="3">
        <name>FAD</name>
        <dbReference type="ChEBI" id="CHEBI:57692"/>
    </cofactor>
    <text evidence="3">Binds 1 FAD per subunit.</text>
</comment>
<comment type="activity regulation">
    <text evidence="3">Strongly inhibited by acifluorfen.</text>
</comment>
<comment type="biophysicochemical properties">
    <kinetics>
        <KM evidence="3">1.6 uM for protoporphyrinogen</KM>
        <text evidence="3">kcat is 5.2 min(-1).</text>
    </kinetics>
</comment>
<comment type="pathway">
    <text evidence="8">Porphyrin-containing compound metabolism; protoporphyrin-IX biosynthesis; protoporphyrin-IX from protoporphyrinogen-IX: step 1/1.</text>
</comment>
<comment type="subunit">
    <text evidence="2 3">Monomer (PubMed:17046834). Homodimer (PubMed:8621504).</text>
</comment>
<comment type="subcellular location">
    <subcellularLocation>
        <location evidence="2">Cytoplasm</location>
    </subcellularLocation>
    <subcellularLocation>
        <location evidence="2">Cell membrane</location>
    </subcellularLocation>
    <text evidence="2">Membrane-associated.</text>
</comment>
<comment type="similarity">
    <text evidence="7">Belongs to the protoporphyrinogen/coproporphyrinogen oxidase family. Protoporphyrinogen oxidase subfamily.</text>
</comment>
<sequence length="471" mass="49388">MHHMPRTTGMNVAVVGGGISGLAVAHHLRSRGTDAVLLESSARLGGAVGTHALAGYLVEQGPNSFLDREPATRALAAALNLEGRIRAADPAAKRRYVYTRGRLRSVPASPPAFLASDILPLGARLRVAGELFSRRAPEGVDESLAAFGRRHLGHRATQVLLDAVQTGIYAGDVEQLSVAATFPMLVKMEREHRSLILGAIRAQKAQRQAALPAGTAPKLSGALSTFDGGLQVLIDALAASLGDAAHVGARVEGLAREDGGWRLIIEEHGRRAELSVAQVVLAAPAHATAKLLRPLDDALAALVAGIAYAPIAVVHLGFDAGTLPAPDGFGFLVPAEEQRRMLGAIHASTTFPFRAEGGRVLYSCMVGGARQPGLVEQDEDALAALAREELKALAGVTARPSFTRVFRWPLGIPQYNLGHLERVAAIDAALQRLPGLHLIGNAYKGVGLNDCIRNAAQLADALVAGNTSHAP</sequence>
<reference key="1">
    <citation type="journal article" date="1992" name="Genes Dev.">
        <title>csgA expression entrains Myxococcus xanthus development.</title>
        <authorList>
            <person name="Li S."/>
            <person name="Lee B.U."/>
            <person name="Shimkets L.J."/>
        </authorList>
    </citation>
    <scope>NUCLEOTIDE SEQUENCE [GENOMIC DNA]</scope>
</reference>
<reference key="2">
    <citation type="submission" date="2002-05" db="EMBL/GenBank/DDBJ databases">
        <authorList>
            <person name="Shimkets L.J."/>
        </authorList>
    </citation>
    <scope>SEQUENCE REVISION TO C-TERMINUS</scope>
</reference>
<reference key="3">
    <citation type="journal article" date="1996" name="J. Biol. Chem.">
        <title>Protoporphyrinogen oxidase of Myxococcus xanthus. Expression, purification, and characterization of the cloned enzyme.</title>
        <authorList>
            <person name="Dailey H.A."/>
            <person name="Dailey T.A."/>
        </authorList>
    </citation>
    <scope>FUNCTION</scope>
    <scope>CATALYTIC ACTIVITY</scope>
    <scope>COFACTOR</scope>
    <scope>ACTIVITY REGULATION</scope>
    <scope>BIOPHYSICOCHEMICAL PROPERTIES</scope>
    <scope>SUBUNIT</scope>
</reference>
<reference key="4">
    <citation type="journal article" date="2017" name="Microbiol. Mol. Biol. Rev.">
        <title>Prokaryotic heme biosynthesis: multiple pathways to a common essential product.</title>
        <authorList>
            <person name="Dailey H.A."/>
            <person name="Dailey T.A."/>
            <person name="Gerdes S."/>
            <person name="Jahn D."/>
            <person name="Jahn M."/>
            <person name="O'Brian M.R."/>
            <person name="Warren M.J."/>
        </authorList>
    </citation>
    <scope>NOMENCLATURE</scope>
    <scope>FUNCTION</scope>
    <scope>REVIEW</scope>
</reference>
<reference key="5">
    <citation type="journal article" date="2006" name="J. Biol. Chem.">
        <title>Crystal structure of protoporphyrinogen oxidase from Myxococcus xanthus and its complex with the inhibitor acifluorfen.</title>
        <authorList>
            <person name="Corradi H.R."/>
            <person name="Corrigall A.V."/>
            <person name="Boix E."/>
            <person name="Mohan C.G."/>
            <person name="Sturrock E.D."/>
            <person name="Meissner P.N."/>
            <person name="Acharya K.R."/>
        </authorList>
    </citation>
    <scope>X-RAY CRYSTALLOGRAPHY (2.30 ANGSTROMS) OF 4-471 IN COMPLEX WITH FAD AND ACIFLUORFEN</scope>
    <scope>SUBUNIT</scope>
    <scope>SUBCELLULAR LOCATION</scope>
</reference>
<evidence type="ECO:0000250" key="1"/>
<evidence type="ECO:0000269" key="2">
    <source>
    </source>
</evidence>
<evidence type="ECO:0000269" key="3">
    <source>
    </source>
</evidence>
<evidence type="ECO:0000303" key="4">
    <source>
    </source>
</evidence>
<evidence type="ECO:0000303" key="5">
    <source>
    </source>
</evidence>
<evidence type="ECO:0000303" key="6">
    <source>
    </source>
</evidence>
<evidence type="ECO:0000305" key="7"/>
<evidence type="ECO:0000305" key="8">
    <source>
    </source>
</evidence>
<evidence type="ECO:0007829" key="9">
    <source>
        <dbReference type="PDB" id="2IVD"/>
    </source>
</evidence>
<evidence type="ECO:0007829" key="10">
    <source>
        <dbReference type="PDB" id="2IVE"/>
    </source>
</evidence>
<protein>
    <recommendedName>
        <fullName evidence="6">Protoporphyrinogen oxidase</fullName>
        <shortName evidence="4">PPOX</shortName>
        <ecNumber evidence="2">1.3.3.4</ecNumber>
    </recommendedName>
</protein>